<protein>
    <recommendedName>
        <fullName>Serotransferrin-1</fullName>
    </recommendedName>
    <alternativeName>
        <fullName>Serotransferrin I</fullName>
        <shortName>STF I</shortName>
        <shortName>sTF1</shortName>
    </alternativeName>
    <alternativeName>
        <fullName>Siderophilin I</fullName>
    </alternativeName>
</protein>
<proteinExistence type="evidence at protein level"/>
<organism>
    <name type="scientific">Salmo salar</name>
    <name type="common">Atlantic salmon</name>
    <dbReference type="NCBI Taxonomy" id="8030"/>
    <lineage>
        <taxon>Eukaryota</taxon>
        <taxon>Metazoa</taxon>
        <taxon>Chordata</taxon>
        <taxon>Craniata</taxon>
        <taxon>Vertebrata</taxon>
        <taxon>Euteleostomi</taxon>
        <taxon>Actinopterygii</taxon>
        <taxon>Neopterygii</taxon>
        <taxon>Teleostei</taxon>
        <taxon>Protacanthopterygii</taxon>
        <taxon>Salmoniformes</taxon>
        <taxon>Salmonidae</taxon>
        <taxon>Salmoninae</taxon>
        <taxon>Salmo</taxon>
    </lineage>
</organism>
<keyword id="KW-0903">Direct protein sequencing</keyword>
<keyword id="KW-1015">Disulfide bond</keyword>
<keyword id="KW-0325">Glycoprotein</keyword>
<keyword id="KW-0406">Ion transport</keyword>
<keyword id="KW-0408">Iron</keyword>
<keyword id="KW-0410">Iron transport</keyword>
<keyword id="KW-0479">Metal-binding</keyword>
<keyword id="KW-1185">Reference proteome</keyword>
<keyword id="KW-0677">Repeat</keyword>
<keyword id="KW-0964">Secreted</keyword>
<keyword id="KW-0732">Signal</keyword>
<keyword id="KW-0813">Transport</keyword>
<name>TRFE1_SALSA</name>
<feature type="signal peptide" evidence="3">
    <location>
        <begin position="1"/>
        <end position="18"/>
    </location>
</feature>
<feature type="chain" id="PRO_0000035724" description="Serotransferrin-1">
    <location>
        <begin position="19"/>
        <end position="690"/>
    </location>
</feature>
<feature type="domain" description="Transferrin-like 1" evidence="2">
    <location>
        <begin position="25"/>
        <end position="329"/>
    </location>
</feature>
<feature type="domain" description="Transferrin-like 2" evidence="2">
    <location>
        <begin position="340"/>
        <end position="669"/>
    </location>
</feature>
<feature type="binding site" evidence="2">
    <location>
        <position position="74"/>
    </location>
    <ligand>
        <name>Fe(3+)</name>
        <dbReference type="ChEBI" id="CHEBI:29034"/>
        <label>1</label>
    </ligand>
</feature>
<feature type="binding site" evidence="2">
    <location>
        <position position="104"/>
    </location>
    <ligand>
        <name>Fe(3+)</name>
        <dbReference type="ChEBI" id="CHEBI:29034"/>
        <label>1</label>
    </ligand>
</feature>
<feature type="binding site" evidence="2">
    <location>
        <position position="129"/>
    </location>
    <ligand>
        <name>hydrogencarbonate</name>
        <dbReference type="ChEBI" id="CHEBI:17544"/>
        <label>1</label>
    </ligand>
</feature>
<feature type="binding site" evidence="2">
    <location>
        <position position="134"/>
    </location>
    <ligand>
        <name>hydrogencarbonate</name>
        <dbReference type="ChEBI" id="CHEBI:17544"/>
        <label>1</label>
    </ligand>
</feature>
<feature type="binding site" evidence="2">
    <location>
        <position position="136"/>
    </location>
    <ligand>
        <name>hydrogencarbonate</name>
        <dbReference type="ChEBI" id="CHEBI:17544"/>
        <label>1</label>
    </ligand>
</feature>
<feature type="binding site" evidence="2">
    <location>
        <position position="137"/>
    </location>
    <ligand>
        <name>hydrogencarbonate</name>
        <dbReference type="ChEBI" id="CHEBI:17544"/>
        <label>1</label>
    </ligand>
</feature>
<feature type="binding site" evidence="2">
    <location>
        <position position="201"/>
    </location>
    <ligand>
        <name>Fe(3+)</name>
        <dbReference type="ChEBI" id="CHEBI:29034"/>
        <label>1</label>
    </ligand>
</feature>
<feature type="binding site" evidence="2">
    <location>
        <position position="257"/>
    </location>
    <ligand>
        <name>Fe(3+)</name>
        <dbReference type="ChEBI" id="CHEBI:29034"/>
        <label>1</label>
    </ligand>
</feature>
<feature type="binding site" evidence="2">
    <location>
        <position position="394"/>
    </location>
    <ligand>
        <name>Fe(3+)</name>
        <dbReference type="ChEBI" id="CHEBI:29034"/>
        <label>2</label>
    </ligand>
</feature>
<feature type="binding site" evidence="2">
    <location>
        <position position="428"/>
    </location>
    <ligand>
        <name>Fe(3+)</name>
        <dbReference type="ChEBI" id="CHEBI:29034"/>
        <label>2</label>
    </ligand>
</feature>
<feature type="binding site" evidence="2">
    <location>
        <position position="453"/>
    </location>
    <ligand>
        <name>hydrogencarbonate</name>
        <dbReference type="ChEBI" id="CHEBI:17544"/>
        <label>2</label>
    </ligand>
</feature>
<feature type="binding site" evidence="2">
    <location>
        <position position="457"/>
    </location>
    <ligand>
        <name>hydrogencarbonate</name>
        <dbReference type="ChEBI" id="CHEBI:17544"/>
        <label>2</label>
    </ligand>
</feature>
<feature type="binding site" evidence="2">
    <location>
        <position position="459"/>
    </location>
    <ligand>
        <name>hydrogencarbonate</name>
        <dbReference type="ChEBI" id="CHEBI:17544"/>
        <label>2</label>
    </ligand>
</feature>
<feature type="binding site" evidence="2">
    <location>
        <position position="460"/>
    </location>
    <ligand>
        <name>hydrogencarbonate</name>
        <dbReference type="ChEBI" id="CHEBI:17544"/>
        <label>2</label>
    </ligand>
</feature>
<feature type="binding site" evidence="2">
    <location>
        <position position="523"/>
    </location>
    <ligand>
        <name>Fe(3+)</name>
        <dbReference type="ChEBI" id="CHEBI:29034"/>
        <label>2</label>
    </ligand>
</feature>
<feature type="binding site" evidence="2">
    <location>
        <position position="591"/>
    </location>
    <ligand>
        <name>Fe(3+)</name>
        <dbReference type="ChEBI" id="CHEBI:29034"/>
        <label>2</label>
    </ligand>
</feature>
<feature type="glycosylation site" description="N-linked (GlcNAc...) asparagine" evidence="1">
    <location>
        <position position="169"/>
    </location>
</feature>
<feature type="disulfide bond" evidence="2">
    <location>
        <begin position="28"/>
        <end position="50"/>
    </location>
</feature>
<feature type="disulfide bond" evidence="2">
    <location>
        <begin position="127"/>
        <end position="207"/>
    </location>
</feature>
<feature type="disulfide bond" evidence="2">
    <location>
        <begin position="172"/>
        <end position="186"/>
    </location>
</feature>
<feature type="disulfide bond" evidence="2">
    <location>
        <begin position="235"/>
        <end position="249"/>
    </location>
</feature>
<feature type="disulfide bond" evidence="2">
    <location>
        <begin position="343"/>
        <end position="379"/>
    </location>
</feature>
<feature type="disulfide bond" evidence="2">
    <location>
        <begin position="353"/>
        <end position="370"/>
    </location>
</feature>
<feature type="disulfide bond" evidence="2">
    <location>
        <begin position="404"/>
        <end position="681"/>
    </location>
</feature>
<feature type="disulfide bond" evidence="2">
    <location>
        <begin position="419"/>
        <end position="642"/>
    </location>
</feature>
<feature type="disulfide bond" evidence="2">
    <location>
        <begin position="451"/>
        <end position="529"/>
    </location>
</feature>
<feature type="disulfide bond" evidence="2">
    <location>
        <begin position="475"/>
        <end position="670"/>
    </location>
</feature>
<feature type="disulfide bond" evidence="2">
    <location>
        <begin position="485"/>
        <end position="499"/>
    </location>
</feature>
<feature type="disulfide bond" evidence="2">
    <location>
        <begin position="496"/>
        <end position="512"/>
    </location>
</feature>
<feature type="disulfide bond" evidence="2">
    <location>
        <begin position="569"/>
        <end position="583"/>
    </location>
</feature>
<feature type="sequence conflict" description="In Ref. 3; AA sequence." evidence="4" ref="3">
    <original>E</original>
    <variation>Q</variation>
    <location>
        <position position="34"/>
    </location>
</feature>
<dbReference type="EMBL" id="L20313">
    <property type="protein sequence ID" value="AAA18838.1"/>
    <property type="molecule type" value="mRNA"/>
</dbReference>
<dbReference type="EMBL" id="L26909">
    <property type="protein sequence ID" value="AAC42221.1"/>
    <property type="molecule type" value="Genomic_DNA"/>
</dbReference>
<dbReference type="PIR" id="I51350">
    <property type="entry name" value="I51350"/>
</dbReference>
<dbReference type="PIR" id="T11749">
    <property type="entry name" value="T11749"/>
</dbReference>
<dbReference type="RefSeq" id="NP_001117127.1">
    <property type="nucleotide sequence ID" value="NM_001123655.1"/>
</dbReference>
<dbReference type="SMR" id="P80426"/>
<dbReference type="STRING" id="8030.ENSSSAP00000074134"/>
<dbReference type="MEROPS" id="S60.970"/>
<dbReference type="GlyCosmos" id="P80426">
    <property type="glycosylation" value="1 site, No reported glycans"/>
</dbReference>
<dbReference type="PaxDb" id="8030-ENSSSAP00000074134"/>
<dbReference type="GeneID" id="100136560"/>
<dbReference type="KEGG" id="sasa:100136560"/>
<dbReference type="CTD" id="30255"/>
<dbReference type="Proteomes" id="UP000087266">
    <property type="component" value="Chromosome ssa03"/>
</dbReference>
<dbReference type="GO" id="GO:0005769">
    <property type="term" value="C:early endosome"/>
    <property type="evidence" value="ECO:0007669"/>
    <property type="project" value="TreeGrafter"/>
</dbReference>
<dbReference type="GO" id="GO:0005615">
    <property type="term" value="C:extracellular space"/>
    <property type="evidence" value="ECO:0007669"/>
    <property type="project" value="InterPro"/>
</dbReference>
<dbReference type="GO" id="GO:0005886">
    <property type="term" value="C:plasma membrane"/>
    <property type="evidence" value="ECO:0007669"/>
    <property type="project" value="TreeGrafter"/>
</dbReference>
<dbReference type="GO" id="GO:0055037">
    <property type="term" value="C:recycling endosome"/>
    <property type="evidence" value="ECO:0007669"/>
    <property type="project" value="TreeGrafter"/>
</dbReference>
<dbReference type="GO" id="GO:0046872">
    <property type="term" value="F:metal ion binding"/>
    <property type="evidence" value="ECO:0007669"/>
    <property type="project" value="UniProtKB-KW"/>
</dbReference>
<dbReference type="GO" id="GO:0019731">
    <property type="term" value="P:antibacterial humoral response"/>
    <property type="evidence" value="ECO:0007669"/>
    <property type="project" value="TreeGrafter"/>
</dbReference>
<dbReference type="GO" id="GO:0006826">
    <property type="term" value="P:iron ion transport"/>
    <property type="evidence" value="ECO:0007669"/>
    <property type="project" value="UniProtKB-KW"/>
</dbReference>
<dbReference type="CDD" id="cd13617">
    <property type="entry name" value="PBP2_transferrin_C"/>
    <property type="match status" value="1"/>
</dbReference>
<dbReference type="FunFam" id="3.40.190.10:FF:000095">
    <property type="entry name" value="Lactotransferrin"/>
    <property type="match status" value="2"/>
</dbReference>
<dbReference type="Gene3D" id="3.40.190.10">
    <property type="entry name" value="Periplasmic binding protein-like II"/>
    <property type="match status" value="4"/>
</dbReference>
<dbReference type="InterPro" id="IPR016357">
    <property type="entry name" value="Transferrin"/>
</dbReference>
<dbReference type="InterPro" id="IPR001156">
    <property type="entry name" value="Transferrin-like_dom"/>
</dbReference>
<dbReference type="InterPro" id="IPR018195">
    <property type="entry name" value="Transferrin_Fe_BS"/>
</dbReference>
<dbReference type="PANTHER" id="PTHR11485:SF31">
    <property type="entry name" value="SEROTRANSFERRIN"/>
    <property type="match status" value="1"/>
</dbReference>
<dbReference type="PANTHER" id="PTHR11485">
    <property type="entry name" value="TRANSFERRIN"/>
    <property type="match status" value="1"/>
</dbReference>
<dbReference type="Pfam" id="PF00405">
    <property type="entry name" value="Transferrin"/>
    <property type="match status" value="2"/>
</dbReference>
<dbReference type="PIRSF" id="PIRSF002549">
    <property type="entry name" value="Transferrin"/>
    <property type="match status" value="1"/>
</dbReference>
<dbReference type="PRINTS" id="PR00422">
    <property type="entry name" value="TRANSFERRIN"/>
</dbReference>
<dbReference type="SMART" id="SM00094">
    <property type="entry name" value="TR_FER"/>
    <property type="match status" value="2"/>
</dbReference>
<dbReference type="SUPFAM" id="SSF53850">
    <property type="entry name" value="Periplasmic binding protein-like II"/>
    <property type="match status" value="2"/>
</dbReference>
<dbReference type="PROSITE" id="PS00205">
    <property type="entry name" value="TRANSFERRIN_LIKE_1"/>
    <property type="match status" value="2"/>
</dbReference>
<dbReference type="PROSITE" id="PS00206">
    <property type="entry name" value="TRANSFERRIN_LIKE_2"/>
    <property type="match status" value="2"/>
</dbReference>
<dbReference type="PROSITE" id="PS00207">
    <property type="entry name" value="TRANSFERRIN_LIKE_3"/>
    <property type="match status" value="1"/>
</dbReference>
<dbReference type="PROSITE" id="PS51408">
    <property type="entry name" value="TRANSFERRIN_LIKE_4"/>
    <property type="match status" value="2"/>
</dbReference>
<evidence type="ECO:0000255" key="1"/>
<evidence type="ECO:0000255" key="2">
    <source>
        <dbReference type="PROSITE-ProRule" id="PRU00741"/>
    </source>
</evidence>
<evidence type="ECO:0000269" key="3">
    <source ref="3"/>
</evidence>
<evidence type="ECO:0000305" key="4"/>
<gene>
    <name type="primary">tf1</name>
</gene>
<sequence>MKLLLLSALLGCLATAYAAPAEGIVKWCVKSEQELRKCHDLAAKVAEFSCVRKDGSFECIQAIKGGEADAITLDGGDIYTAGLTNYGLQPIIAEDYGEDSDTCYYAVAVAKKGTAFGFKTLRGKKSCHTGLGKSAGWNIPIGTLVTESQIRWAGIEDRPVESAVSDFFNASCAPGATMGSKLCQLCKGDCSRSHKEPYYDYAGAFQCLKDGAGDVAFIKPLAVPAAEKASYELLCKDGTRASIDSYKTCHLARVPAHAVVSRKDPELANRIYNKLVAVKDFNLFSSDGYAAKNLMFKDSAQKLVQLPTTTDSFLYLGAEYMSTIRSLKKSQATGASSRAIKWCAVGHAEKGKCDTWTINSFADGESKISCQDAPTVEECIKKIMRKEADAIAVDGGEVYTAGKCGLVPVMVEQYDADLCSAPGEASSYYAVAVAKKGSGLTWKTLKGKRSCHTGLGRTAGWNIPMGLIHQETNDCDFTKYFSKGCAPGSEVGSPFCAQCKGSGKAVGDEYRCKARSEEQYYGYTGAFRCLVEDAGDVAFIKHTIVPESTDGNGPDWAKDLKSSDFELLCQDGTTQPVTKFSECHLAKVPAHAVITRPETRGDVVSILLELQAKFGSSGSDSSFRMFQSSVEKNLLFKDSTKCLQEIPKGTKYQDFLGKEYMIAMQSLRKCSDSTSDLEKACTFHSCQQKE</sequence>
<comment type="function">
    <text>Transferrins are iron binding transport proteins which can bind two Fe(3+) ions in association with the binding of an anion, usually bicarbonate. It is responsible for the transport of iron from sites of absorption and heme degradation to those of storage and utilization. Serum transferrin may also have a further role in stimulating cell proliferation.</text>
</comment>
<comment type="subunit">
    <text>Monomer.</text>
</comment>
<comment type="subcellular location">
    <subcellularLocation>
        <location>Secreted</location>
    </subcellularLocation>
</comment>
<comment type="tissue specificity">
    <text>Abundant in liver and serum with smaller amounts found in the stomach and kidney.</text>
</comment>
<comment type="similarity">
    <text evidence="2">Belongs to the transferrin family.</text>
</comment>
<accession>P80426</accession>
<reference key="1">
    <citation type="journal article" date="1993" name="Mol. Mar. Biol. Biotechnol.">
        <title>Cloning and characterization of Atlantic salmon (Salmo salar) serum transferrin cDNA.</title>
        <authorList>
            <person name="Kvingedal A.M."/>
            <person name="Roervik K.A."/>
            <person name="Alestroem P."/>
        </authorList>
    </citation>
    <scope>NUCLEOTIDE SEQUENCE [MRNA]</scope>
    <source>
        <tissue>Liver</tissue>
    </source>
</reference>
<reference key="2">
    <citation type="journal article" date="1994" name="Gene">
        <title>Characterization of the 5' region of the Atlantic salmon (Salmo salar) transferrin-encoding gene.</title>
        <authorList>
            <person name="Kvingedal A.M."/>
        </authorList>
    </citation>
    <scope>NUCLEOTIDE SEQUENCE [GENOMIC DNA] OF 1-64</scope>
</reference>
<reference key="3">
    <citation type="journal article" date="1995" name="Fish Shellfish Immunol.">
        <title>Immunoassay and partial characterization of serum transferrin from Atlantic salon (Salmo salr L.).</title>
        <authorList>
            <person name="Roeed K.H."/>
            <person name="Dehli A.K."/>
            <person name="Flengsrud R."/>
            <person name="Midthjell L."/>
            <person name="Roervik K.A."/>
        </authorList>
    </citation>
    <scope>PROTEIN SEQUENCE OF 19-37</scope>
    <source>
        <tissue>Serum</tissue>
    </source>
</reference>